<keyword id="KW-0285">Flavoprotein</keyword>
<keyword id="KW-0288">FMN</keyword>
<keyword id="KW-0521">NADP</keyword>
<keyword id="KW-0560">Oxidoreductase</keyword>
<keyword id="KW-1185">Reference proteome</keyword>
<keyword id="KW-0694">RNA-binding</keyword>
<keyword id="KW-0819">tRNA processing</keyword>
<keyword id="KW-0820">tRNA-binding</keyword>
<protein>
    <recommendedName>
        <fullName evidence="1">tRNA-dihydrouridine(20/20a) synthase</fullName>
        <ecNumber evidence="1">1.3.1.-</ecNumber>
        <ecNumber evidence="1">1.3.1.91</ecNumber>
    </recommendedName>
    <alternativeName>
        <fullName evidence="1">U20-specific dihydrouridine synthase</fullName>
        <shortName evidence="1">U20-specific Dus</shortName>
    </alternativeName>
    <alternativeName>
        <fullName evidence="1">tRNA-dihydrouridine synthase A</fullName>
    </alternativeName>
</protein>
<gene>
    <name evidence="1" type="primary">dusA</name>
    <name type="ordered locus">c5018</name>
</gene>
<comment type="function">
    <text evidence="1">Catalyzes the synthesis of 5,6-dihydrouridine (D), a modified base found in the D-loop of most tRNAs, via the reduction of the C5-C6 double bond in target uridines. Specifically modifies U20 and U20a in tRNAs.</text>
</comment>
<comment type="catalytic activity">
    <reaction evidence="1">
        <text>5,6-dihydrouridine(20) in tRNA + NADP(+) = uridine(20) in tRNA + NADPH + H(+)</text>
        <dbReference type="Rhea" id="RHEA:53336"/>
        <dbReference type="Rhea" id="RHEA-COMP:13533"/>
        <dbReference type="Rhea" id="RHEA-COMP:13534"/>
        <dbReference type="ChEBI" id="CHEBI:15378"/>
        <dbReference type="ChEBI" id="CHEBI:57783"/>
        <dbReference type="ChEBI" id="CHEBI:58349"/>
        <dbReference type="ChEBI" id="CHEBI:65315"/>
        <dbReference type="ChEBI" id="CHEBI:74443"/>
        <dbReference type="EC" id="1.3.1.91"/>
    </reaction>
</comment>
<comment type="catalytic activity">
    <reaction evidence="1">
        <text>5,6-dihydrouridine(20) in tRNA + NAD(+) = uridine(20) in tRNA + NADH + H(+)</text>
        <dbReference type="Rhea" id="RHEA:53340"/>
        <dbReference type="Rhea" id="RHEA-COMP:13533"/>
        <dbReference type="Rhea" id="RHEA-COMP:13534"/>
        <dbReference type="ChEBI" id="CHEBI:15378"/>
        <dbReference type="ChEBI" id="CHEBI:57540"/>
        <dbReference type="ChEBI" id="CHEBI:57945"/>
        <dbReference type="ChEBI" id="CHEBI:65315"/>
        <dbReference type="ChEBI" id="CHEBI:74443"/>
        <dbReference type="EC" id="1.3.1.91"/>
    </reaction>
</comment>
<comment type="catalytic activity">
    <reaction evidence="1">
        <text>5,6-dihydrouridine(20a) in tRNA + NADP(+) = uridine(20a) in tRNA + NADPH + H(+)</text>
        <dbReference type="Rhea" id="RHEA:53344"/>
        <dbReference type="Rhea" id="RHEA-COMP:13535"/>
        <dbReference type="Rhea" id="RHEA-COMP:13536"/>
        <dbReference type="ChEBI" id="CHEBI:15378"/>
        <dbReference type="ChEBI" id="CHEBI:57783"/>
        <dbReference type="ChEBI" id="CHEBI:58349"/>
        <dbReference type="ChEBI" id="CHEBI:65315"/>
        <dbReference type="ChEBI" id="CHEBI:74443"/>
    </reaction>
</comment>
<comment type="catalytic activity">
    <reaction evidence="1">
        <text>5,6-dihydrouridine(20a) in tRNA + NAD(+) = uridine(20a) in tRNA + NADH + H(+)</text>
        <dbReference type="Rhea" id="RHEA:53348"/>
        <dbReference type="Rhea" id="RHEA-COMP:13535"/>
        <dbReference type="Rhea" id="RHEA-COMP:13536"/>
        <dbReference type="ChEBI" id="CHEBI:15378"/>
        <dbReference type="ChEBI" id="CHEBI:57540"/>
        <dbReference type="ChEBI" id="CHEBI:57945"/>
        <dbReference type="ChEBI" id="CHEBI:65315"/>
        <dbReference type="ChEBI" id="CHEBI:74443"/>
    </reaction>
</comment>
<comment type="cofactor">
    <cofactor evidence="1">
        <name>FMN</name>
        <dbReference type="ChEBI" id="CHEBI:58210"/>
    </cofactor>
</comment>
<comment type="similarity">
    <text evidence="1">Belongs to the Dus family. DusA subfamily.</text>
</comment>
<proteinExistence type="inferred from homology"/>
<evidence type="ECO:0000255" key="1">
    <source>
        <dbReference type="HAMAP-Rule" id="MF_02041"/>
    </source>
</evidence>
<reference key="1">
    <citation type="journal article" date="2002" name="Proc. Natl. Acad. Sci. U.S.A.">
        <title>Extensive mosaic structure revealed by the complete genome sequence of uropathogenic Escherichia coli.</title>
        <authorList>
            <person name="Welch R.A."/>
            <person name="Burland V."/>
            <person name="Plunkett G. III"/>
            <person name="Redford P."/>
            <person name="Roesch P."/>
            <person name="Rasko D."/>
            <person name="Buckles E.L."/>
            <person name="Liou S.-R."/>
            <person name="Boutin A."/>
            <person name="Hackett J."/>
            <person name="Stroud D."/>
            <person name="Mayhew G.F."/>
            <person name="Rose D.J."/>
            <person name="Zhou S."/>
            <person name="Schwartz D.C."/>
            <person name="Perna N.T."/>
            <person name="Mobley H.L.T."/>
            <person name="Donnenberg M.S."/>
            <person name="Blattner F.R."/>
        </authorList>
    </citation>
    <scope>NUCLEOTIDE SEQUENCE [LARGE SCALE GENOMIC DNA]</scope>
    <source>
        <strain>CFT073 / ATCC 700928 / UPEC</strain>
    </source>
</reference>
<dbReference type="EC" id="1.3.1.-" evidence="1"/>
<dbReference type="EC" id="1.3.1.91" evidence="1"/>
<dbReference type="EMBL" id="AE014075">
    <property type="protein sequence ID" value="AAN83444.1"/>
    <property type="molecule type" value="Genomic_DNA"/>
</dbReference>
<dbReference type="RefSeq" id="WP_001110630.1">
    <property type="nucleotide sequence ID" value="NZ_CP051263.1"/>
</dbReference>
<dbReference type="SMR" id="Q8FB30"/>
<dbReference type="STRING" id="199310.c5018"/>
<dbReference type="KEGG" id="ecc:c5018"/>
<dbReference type="eggNOG" id="COG0042">
    <property type="taxonomic scope" value="Bacteria"/>
</dbReference>
<dbReference type="HOGENOM" id="CLU_013299_2_1_6"/>
<dbReference type="BioCyc" id="ECOL199310:C5018-MONOMER"/>
<dbReference type="Proteomes" id="UP000001410">
    <property type="component" value="Chromosome"/>
</dbReference>
<dbReference type="GO" id="GO:0050660">
    <property type="term" value="F:flavin adenine dinucleotide binding"/>
    <property type="evidence" value="ECO:0007669"/>
    <property type="project" value="InterPro"/>
</dbReference>
<dbReference type="GO" id="GO:0010181">
    <property type="term" value="F:FMN binding"/>
    <property type="evidence" value="ECO:0007669"/>
    <property type="project" value="UniProtKB-UniRule"/>
</dbReference>
<dbReference type="GO" id="GO:0000049">
    <property type="term" value="F:tRNA binding"/>
    <property type="evidence" value="ECO:0007669"/>
    <property type="project" value="UniProtKB-UniRule"/>
</dbReference>
<dbReference type="GO" id="GO:0102264">
    <property type="term" value="F:tRNA-dihydrouridine20 synthase activity"/>
    <property type="evidence" value="ECO:0007669"/>
    <property type="project" value="UniProtKB-EC"/>
</dbReference>
<dbReference type="GO" id="GO:0102266">
    <property type="term" value="F:tRNA-dihydrouridine20a synthase activity"/>
    <property type="evidence" value="ECO:0007669"/>
    <property type="project" value="RHEA"/>
</dbReference>
<dbReference type="CDD" id="cd02801">
    <property type="entry name" value="DUS_like_FMN"/>
    <property type="match status" value="1"/>
</dbReference>
<dbReference type="FunFam" id="1.20.120.1460:FF:000001">
    <property type="entry name" value="tRNA-dihydrouridine(20/20a) synthase"/>
    <property type="match status" value="1"/>
</dbReference>
<dbReference type="FunFam" id="3.20.20.70:FF:000083">
    <property type="entry name" value="tRNA-dihydrouridine(20/20a) synthase"/>
    <property type="match status" value="1"/>
</dbReference>
<dbReference type="Gene3D" id="1.20.120.1460">
    <property type="match status" value="1"/>
</dbReference>
<dbReference type="Gene3D" id="3.20.20.70">
    <property type="entry name" value="Aldolase class I"/>
    <property type="match status" value="1"/>
</dbReference>
<dbReference type="HAMAP" id="MF_02041">
    <property type="entry name" value="DusA_subfam"/>
    <property type="match status" value="1"/>
</dbReference>
<dbReference type="InterPro" id="IPR013785">
    <property type="entry name" value="Aldolase_TIM"/>
</dbReference>
<dbReference type="InterPro" id="IPR035587">
    <property type="entry name" value="DUS-like_FMN-bd"/>
</dbReference>
<dbReference type="InterPro" id="IPR001269">
    <property type="entry name" value="DUS_fam"/>
</dbReference>
<dbReference type="InterPro" id="IPR004653">
    <property type="entry name" value="DusA"/>
</dbReference>
<dbReference type="InterPro" id="IPR018517">
    <property type="entry name" value="tRNA_hU_synthase_CS"/>
</dbReference>
<dbReference type="NCBIfam" id="NF008774">
    <property type="entry name" value="PRK11815.1"/>
    <property type="match status" value="1"/>
</dbReference>
<dbReference type="NCBIfam" id="TIGR00742">
    <property type="entry name" value="yjbN"/>
    <property type="match status" value="1"/>
</dbReference>
<dbReference type="PANTHER" id="PTHR42907">
    <property type="entry name" value="FMN-LINKED OXIDOREDUCTASES SUPERFAMILY PROTEIN"/>
    <property type="match status" value="1"/>
</dbReference>
<dbReference type="PANTHER" id="PTHR42907:SF1">
    <property type="entry name" value="FMN-LINKED OXIDOREDUCTASES SUPERFAMILY PROTEIN"/>
    <property type="match status" value="1"/>
</dbReference>
<dbReference type="Pfam" id="PF01207">
    <property type="entry name" value="Dus"/>
    <property type="match status" value="1"/>
</dbReference>
<dbReference type="PIRSF" id="PIRSF006621">
    <property type="entry name" value="Dus"/>
    <property type="match status" value="1"/>
</dbReference>
<dbReference type="SUPFAM" id="SSF51395">
    <property type="entry name" value="FMN-linked oxidoreductases"/>
    <property type="match status" value="1"/>
</dbReference>
<dbReference type="PROSITE" id="PS01136">
    <property type="entry name" value="UPF0034"/>
    <property type="match status" value="1"/>
</dbReference>
<organism>
    <name type="scientific">Escherichia coli O6:H1 (strain CFT073 / ATCC 700928 / UPEC)</name>
    <dbReference type="NCBI Taxonomy" id="199310"/>
    <lineage>
        <taxon>Bacteria</taxon>
        <taxon>Pseudomonadati</taxon>
        <taxon>Pseudomonadota</taxon>
        <taxon>Gammaproteobacteria</taxon>
        <taxon>Enterobacterales</taxon>
        <taxon>Enterobacteriaceae</taxon>
        <taxon>Escherichia</taxon>
    </lineage>
</organism>
<accession>Q8FB30</accession>
<sequence length="331" mass="36903">MPAESHTVYPAYRFSIAPMLDWTDRHCRYFLRLLSRNTLLYTEMVTTGAIIHGKGDYLAYSEEEHPVALQLGGSDPAALAQCAKLAEARGYDEINLNVGCPSDRVQNGMFGACLMGNAQLVADCVKAMRDVVSIPVTVKTRIGIDDQDSYEFLCDFINTVSGKGECEMFIIHARKAWLSGLSPKENREIPPLDYPRVYQLKRDFPHLTMSINGGIKSLEEAKAHLQHMDGVMVGREAYQNPGILAAVDREIFGSSDTDADPVAVVRAMYPYIERELSQGTYLGHITRHMLGLFQGIPGARQWRRYLSENAHKAGADINVLEHALKLVADKR</sequence>
<feature type="chain" id="PRO_0000162065" description="tRNA-dihydrouridine(20/20a) synthase">
    <location>
        <begin position="1"/>
        <end position="331"/>
    </location>
</feature>
<feature type="active site" description="Proton donor" evidence="1">
    <location>
        <position position="100"/>
    </location>
</feature>
<feature type="binding site" evidence="1">
    <location>
        <begin position="18"/>
        <end position="20"/>
    </location>
    <ligand>
        <name>FMN</name>
        <dbReference type="ChEBI" id="CHEBI:58210"/>
    </ligand>
</feature>
<feature type="binding site" evidence="1">
    <location>
        <position position="70"/>
    </location>
    <ligand>
        <name>FMN</name>
        <dbReference type="ChEBI" id="CHEBI:58210"/>
    </ligand>
</feature>
<feature type="binding site" evidence="1">
    <location>
        <position position="139"/>
    </location>
    <ligand>
        <name>FMN</name>
        <dbReference type="ChEBI" id="CHEBI:58210"/>
    </ligand>
</feature>
<feature type="binding site" evidence="1">
    <location>
        <position position="172"/>
    </location>
    <ligand>
        <name>FMN</name>
        <dbReference type="ChEBI" id="CHEBI:58210"/>
    </ligand>
</feature>
<feature type="binding site" evidence="1">
    <location>
        <begin position="212"/>
        <end position="214"/>
    </location>
    <ligand>
        <name>FMN</name>
        <dbReference type="ChEBI" id="CHEBI:58210"/>
    </ligand>
</feature>
<feature type="binding site" evidence="1">
    <location>
        <begin position="234"/>
        <end position="235"/>
    </location>
    <ligand>
        <name>FMN</name>
        <dbReference type="ChEBI" id="CHEBI:58210"/>
    </ligand>
</feature>
<feature type="site" description="Interacts with tRNA" evidence="1">
    <location>
        <position position="97"/>
    </location>
</feature>
<feature type="site" description="Interacts with tRNA; defines subfamily-specific binding signature" evidence="1">
    <location>
        <position position="184"/>
    </location>
</feature>
<feature type="site" description="Interacts with tRNA" evidence="1">
    <location>
        <position position="187"/>
    </location>
</feature>
<feature type="site" description="Interacts with tRNA; defines subfamily-specific binding signature" evidence="1">
    <location>
        <position position="300"/>
    </location>
</feature>
<feature type="site" description="Interacts with tRNA; defines subfamily-specific binding signature" evidence="1">
    <location>
        <position position="303"/>
    </location>
</feature>
<name>DUSA_ECOL6</name>